<protein>
    <recommendedName>
        <fullName evidence="4">Glucosyl-3-phosphoglycerate phosphatase</fullName>
        <ecNumber evidence="2">3.1.3.85</ecNumber>
    </recommendedName>
    <alternativeName>
        <fullName>Mannosyl-3-phosphoglycerate phosphatase</fullName>
        <ecNumber evidence="2">3.1.3.70</ecNumber>
    </alternativeName>
</protein>
<keyword id="KW-0002">3D-structure</keyword>
<keyword id="KW-0378">Hydrolase</keyword>
<keyword id="KW-1017">Isopeptide bond</keyword>
<keyword id="KW-1185">Reference proteome</keyword>
<keyword id="KW-0832">Ubl conjugation</keyword>
<sequence>MRARRLVMLRHGQTDYNVGSRMQGQLDTELSELGRTQAVAAAEVLGKRQPLLIVSSDLRRAYDTAVKLGERTGLVVRVDTRLRETHLGDWQGLTHAQIDADAPGARLAWREDATWAPHGGESRVDVAARSRPLVAELVASEPEWGGADEPDRPVVLVAHGGLIAALSAALLKLPVANWPALGGMGNASWTQLSGHWAPGSDFESIRWRLDVWNASAQVSSDVL</sequence>
<dbReference type="EC" id="3.1.3.85" evidence="2"/>
<dbReference type="EC" id="3.1.3.70" evidence="2"/>
<dbReference type="EMBL" id="AL123456">
    <property type="protein sequence ID" value="CCP45210.1"/>
    <property type="molecule type" value="Genomic_DNA"/>
</dbReference>
<dbReference type="PIR" id="F70685">
    <property type="entry name" value="F70685"/>
</dbReference>
<dbReference type="RefSeq" id="NP_216935.1">
    <property type="nucleotide sequence ID" value="NC_000962.3"/>
</dbReference>
<dbReference type="RefSeq" id="WP_003412388.1">
    <property type="nucleotide sequence ID" value="NZ_NVQJ01000054.1"/>
</dbReference>
<dbReference type="PDB" id="4PZ9">
    <property type="method" value="X-ray"/>
    <property type="resolution" value="1.94 A"/>
    <property type="chains" value="A/B=1-223"/>
</dbReference>
<dbReference type="PDB" id="4PZA">
    <property type="method" value="X-ray"/>
    <property type="resolution" value="1.78 A"/>
    <property type="chains" value="A/B=1-223"/>
</dbReference>
<dbReference type="PDB" id="4QIH">
    <property type="method" value="X-ray"/>
    <property type="resolution" value="2.30 A"/>
    <property type="chains" value="A/B=1-223"/>
</dbReference>
<dbReference type="PDB" id="6S2Q">
    <property type="method" value="X-ray"/>
    <property type="resolution" value="2.50 A"/>
    <property type="chains" value="A/B/C/D=1-223"/>
</dbReference>
<dbReference type="PDB" id="6S2R">
    <property type="method" value="X-ray"/>
    <property type="resolution" value="1.45 A"/>
    <property type="chains" value="A/B=1-223"/>
</dbReference>
<dbReference type="PDBsum" id="4PZ9"/>
<dbReference type="PDBsum" id="4PZA"/>
<dbReference type="PDBsum" id="4QIH"/>
<dbReference type="PDBsum" id="6S2Q"/>
<dbReference type="PDBsum" id="6S2R"/>
<dbReference type="SMR" id="P9WIC7"/>
<dbReference type="FunCoup" id="P9WIC7">
    <property type="interactions" value="145"/>
</dbReference>
<dbReference type="STRING" id="83332.Rv2419c"/>
<dbReference type="SwissLipids" id="SLP:000001399"/>
<dbReference type="PaxDb" id="83332-Rv2419c"/>
<dbReference type="DNASU" id="885727"/>
<dbReference type="GeneID" id="45426406"/>
<dbReference type="GeneID" id="885727"/>
<dbReference type="KEGG" id="mtu:Rv2419c"/>
<dbReference type="KEGG" id="mtv:RVBD_2419c"/>
<dbReference type="TubercuList" id="Rv2419c"/>
<dbReference type="eggNOG" id="COG0406">
    <property type="taxonomic scope" value="Bacteria"/>
</dbReference>
<dbReference type="InParanoid" id="P9WIC7"/>
<dbReference type="OrthoDB" id="9781415at2"/>
<dbReference type="PhylomeDB" id="P9WIC7"/>
<dbReference type="BRENDA" id="3.1.3.85">
    <property type="organism ID" value="3445"/>
</dbReference>
<dbReference type="Proteomes" id="UP000001584">
    <property type="component" value="Chromosome"/>
</dbReference>
<dbReference type="GO" id="GO:0005737">
    <property type="term" value="C:cytoplasm"/>
    <property type="evidence" value="ECO:0000318"/>
    <property type="project" value="GO_Central"/>
</dbReference>
<dbReference type="GO" id="GO:0050531">
    <property type="term" value="F:mannosyl-3-phosphoglycerate phosphatase activity"/>
    <property type="evidence" value="ECO:0007669"/>
    <property type="project" value="UniProtKB-EC"/>
</dbReference>
<dbReference type="GO" id="GO:0016791">
    <property type="term" value="F:phosphatase activity"/>
    <property type="evidence" value="ECO:0000314"/>
    <property type="project" value="UniProtKB"/>
</dbReference>
<dbReference type="GO" id="GO:0016311">
    <property type="term" value="P:dephosphorylation"/>
    <property type="evidence" value="ECO:0000314"/>
    <property type="project" value="UniProtKB"/>
</dbReference>
<dbReference type="CDD" id="cd07067">
    <property type="entry name" value="HP_PGM_like"/>
    <property type="match status" value="1"/>
</dbReference>
<dbReference type="FunFam" id="3.40.50.1240:FF:000077">
    <property type="entry name" value="Glucosyl-3-phosphoglycerate phosphatase"/>
    <property type="match status" value="1"/>
</dbReference>
<dbReference type="Gene3D" id="3.40.50.1240">
    <property type="entry name" value="Phosphoglycerate mutase-like"/>
    <property type="match status" value="1"/>
</dbReference>
<dbReference type="InterPro" id="IPR013078">
    <property type="entry name" value="His_Pase_superF_clade-1"/>
</dbReference>
<dbReference type="InterPro" id="IPR029033">
    <property type="entry name" value="His_PPase_superfam"/>
</dbReference>
<dbReference type="InterPro" id="IPR001345">
    <property type="entry name" value="PG/BPGM_mutase_AS"/>
</dbReference>
<dbReference type="InterPro" id="IPR050275">
    <property type="entry name" value="PGM_Phosphatase"/>
</dbReference>
<dbReference type="PANTHER" id="PTHR48100">
    <property type="entry name" value="BROAD-SPECIFICITY PHOSPHATASE YOR283W-RELATED"/>
    <property type="match status" value="1"/>
</dbReference>
<dbReference type="PANTHER" id="PTHR48100:SF62">
    <property type="entry name" value="GLUCOSYL-3-PHOSPHOGLYCERATE PHOSPHATASE"/>
    <property type="match status" value="1"/>
</dbReference>
<dbReference type="Pfam" id="PF00300">
    <property type="entry name" value="His_Phos_1"/>
    <property type="match status" value="1"/>
</dbReference>
<dbReference type="SMART" id="SM00855">
    <property type="entry name" value="PGAM"/>
    <property type="match status" value="1"/>
</dbReference>
<dbReference type="SUPFAM" id="SSF53254">
    <property type="entry name" value="Phosphoglycerate mutase-like"/>
    <property type="match status" value="1"/>
</dbReference>
<dbReference type="PROSITE" id="PS00175">
    <property type="entry name" value="PG_MUTASE"/>
    <property type="match status" value="1"/>
</dbReference>
<feature type="chain" id="PRO_0000396114" description="Glucosyl-3-phosphoglycerate phosphatase">
    <location>
        <begin position="1"/>
        <end position="223"/>
    </location>
</feature>
<feature type="active site" description="Tele-phosphohistidine intermediate" evidence="3">
    <location>
        <position position="11"/>
    </location>
</feature>
<feature type="active site" description="Proton donor/acceptor" evidence="6">
    <location>
        <position position="84"/>
    </location>
</feature>
<feature type="binding site" evidence="6">
    <location>
        <position position="10"/>
    </location>
    <ligand>
        <name>substrate</name>
    </ligand>
</feature>
<feature type="binding site" evidence="6">
    <location>
        <position position="60"/>
    </location>
    <ligand>
        <name>substrate</name>
    </ligand>
</feature>
<feature type="binding site" evidence="6">
    <location>
        <position position="159"/>
    </location>
    <ligand>
        <name>substrate</name>
    </ligand>
</feature>
<feature type="cross-link" description="Isoglutamyl lysine isopeptide (Lys-Gln) (interchain with Q-Cter in protein Pup)" evidence="1">
    <location>
        <position position="47"/>
    </location>
</feature>
<feature type="mutagenesis site" description="Loss of phosphatase activity." evidence="3">
    <original>R</original>
    <variation>A</variation>
    <location>
        <position position="10"/>
    </location>
</feature>
<feature type="mutagenesis site" description="Almost completely abolished phosphatase activity." evidence="3">
    <original>H</original>
    <variation>A</variation>
    <location>
        <position position="11"/>
    </location>
</feature>
<feature type="mutagenesis site" description="About 5% of wild-type phosphatase activity." evidence="3">
    <original>N</original>
    <variation>A</variation>
    <location>
        <position position="17"/>
    </location>
</feature>
<feature type="mutagenesis site" description="Loss of phosphatase activity." evidence="3">
    <original>R</original>
    <variation>A</variation>
    <location>
        <position position="60"/>
    </location>
</feature>
<feature type="mutagenesis site" description="About 5% of wild-type phosphatase activity." evidence="3">
    <original>H</original>
    <variation>A</variation>
    <location>
        <position position="159"/>
    </location>
</feature>
<feature type="mutagenesis site" description="Disrupts dimerization of the enzyme, which exists as a monomer and has lost its ability to perform dephosphorylation." evidence="3">
    <original>L</original>
    <variation>E</variation>
    <location>
        <position position="209"/>
    </location>
</feature>
<feature type="strand" evidence="8">
    <location>
        <begin position="2"/>
        <end position="10"/>
    </location>
</feature>
<feature type="helix" evidence="8">
    <location>
        <begin position="15"/>
        <end position="18"/>
    </location>
</feature>
<feature type="helix" evidence="8">
    <location>
        <begin position="32"/>
        <end position="46"/>
    </location>
</feature>
<feature type="strand" evidence="8">
    <location>
        <begin position="51"/>
        <end position="55"/>
    </location>
</feature>
<feature type="helix" evidence="8">
    <location>
        <begin position="59"/>
        <end position="72"/>
    </location>
</feature>
<feature type="strand" evidence="8">
    <location>
        <begin position="76"/>
        <end position="78"/>
    </location>
</feature>
<feature type="helix" evidence="8">
    <location>
        <begin position="80"/>
        <end position="82"/>
    </location>
</feature>
<feature type="helix" evidence="8">
    <location>
        <begin position="88"/>
        <end position="90"/>
    </location>
</feature>
<feature type="helix" evidence="8">
    <location>
        <begin position="95"/>
        <end position="101"/>
    </location>
</feature>
<feature type="helix" evidence="8">
    <location>
        <begin position="105"/>
        <end position="111"/>
    </location>
</feature>
<feature type="helix" evidence="8">
    <location>
        <begin position="123"/>
        <end position="140"/>
    </location>
</feature>
<feature type="turn" evidence="8">
    <location>
        <begin position="142"/>
        <end position="145"/>
    </location>
</feature>
<feature type="strand" evidence="7">
    <location>
        <begin position="146"/>
        <end position="148"/>
    </location>
</feature>
<feature type="strand" evidence="8">
    <location>
        <begin position="154"/>
        <end position="158"/>
    </location>
</feature>
<feature type="helix" evidence="8">
    <location>
        <begin position="160"/>
        <end position="170"/>
    </location>
</feature>
<feature type="helix" evidence="8">
    <location>
        <begin position="175"/>
        <end position="180"/>
    </location>
</feature>
<feature type="strand" evidence="8">
    <location>
        <begin position="189"/>
        <end position="196"/>
    </location>
</feature>
<feature type="helix" evidence="8">
    <location>
        <begin position="202"/>
        <end position="204"/>
    </location>
</feature>
<feature type="strand" evidence="8">
    <location>
        <begin position="206"/>
        <end position="214"/>
    </location>
</feature>
<feature type="helix" evidence="8">
    <location>
        <begin position="220"/>
        <end position="223"/>
    </location>
</feature>
<reference key="1">
    <citation type="journal article" date="1998" name="Nature">
        <title>Deciphering the biology of Mycobacterium tuberculosis from the complete genome sequence.</title>
        <authorList>
            <person name="Cole S.T."/>
            <person name="Brosch R."/>
            <person name="Parkhill J."/>
            <person name="Garnier T."/>
            <person name="Churcher C.M."/>
            <person name="Harris D.E."/>
            <person name="Gordon S.V."/>
            <person name="Eiglmeier K."/>
            <person name="Gas S."/>
            <person name="Barry C.E. III"/>
            <person name="Tekaia F."/>
            <person name="Badcock K."/>
            <person name="Basham D."/>
            <person name="Brown D."/>
            <person name="Chillingworth T."/>
            <person name="Connor R."/>
            <person name="Davies R.M."/>
            <person name="Devlin K."/>
            <person name="Feltwell T."/>
            <person name="Gentles S."/>
            <person name="Hamlin N."/>
            <person name="Holroyd S."/>
            <person name="Hornsby T."/>
            <person name="Jagels K."/>
            <person name="Krogh A."/>
            <person name="McLean J."/>
            <person name="Moule S."/>
            <person name="Murphy L.D."/>
            <person name="Oliver S."/>
            <person name="Osborne J."/>
            <person name="Quail M.A."/>
            <person name="Rajandream M.A."/>
            <person name="Rogers J."/>
            <person name="Rutter S."/>
            <person name="Seeger K."/>
            <person name="Skelton S."/>
            <person name="Squares S."/>
            <person name="Squares R."/>
            <person name="Sulston J.E."/>
            <person name="Taylor K."/>
            <person name="Whitehead S."/>
            <person name="Barrell B.G."/>
        </authorList>
    </citation>
    <scope>NUCLEOTIDE SEQUENCE [LARGE SCALE GENOMIC DNA]</scope>
    <source>
        <strain>ATCC 25618 / H37Rv</strain>
    </source>
</reference>
<reference key="2">
    <citation type="journal article" date="2010" name="PLoS ONE">
        <title>Prokaryotic ubiquitin-like protein (Pup) proteome of Mycobacterium tuberculosis.</title>
        <authorList>
            <person name="Festa R.A."/>
            <person name="McAllister F."/>
            <person name="Pearce M.J."/>
            <person name="Mintseris J."/>
            <person name="Burns K.E."/>
            <person name="Gygi S.P."/>
            <person name="Darwin K.H."/>
        </authorList>
    </citation>
    <scope>PUPYLATION AT LYS-47</scope>
    <scope>IDENTIFICATION BY MASS SPECTROMETRY</scope>
    <source>
        <strain>ATCC 25618 / H37Rv</strain>
    </source>
</reference>
<reference key="3">
    <citation type="journal article" date="2011" name="Mol. Cell. Proteomics">
        <title>Proteogenomic analysis of Mycobacterium tuberculosis by high resolution mass spectrometry.</title>
        <authorList>
            <person name="Kelkar D.S."/>
            <person name="Kumar D."/>
            <person name="Kumar P."/>
            <person name="Balakrishnan L."/>
            <person name="Muthusamy B."/>
            <person name="Yadav A.K."/>
            <person name="Shrivastava P."/>
            <person name="Marimuthu A."/>
            <person name="Anand S."/>
            <person name="Sundaram H."/>
            <person name="Kingsbury R."/>
            <person name="Harsha H.C."/>
            <person name="Nair B."/>
            <person name="Prasad T.S."/>
            <person name="Chauhan D.S."/>
            <person name="Katoch K."/>
            <person name="Katoch V.M."/>
            <person name="Kumar P."/>
            <person name="Chaerkady R."/>
            <person name="Ramachandran S."/>
            <person name="Dash D."/>
            <person name="Pandey A."/>
        </authorList>
    </citation>
    <scope>IDENTIFICATION BY MASS SPECTROMETRY [LARGE SCALE ANALYSIS]</scope>
    <source>
        <strain>ATCC 25618 / H37Rv</strain>
    </source>
</reference>
<reference key="4">
    <citation type="journal article" date="2011" name="Sci. Rep.">
        <title>Mycobacterium tuberculosis Rv2419c, the missing glucosyl-3-phosphoglycerate phosphatase for the second step in methylglucose lipopolysaccharide biosynthesis.</title>
        <authorList>
            <person name="Mendes V."/>
            <person name="Maranha A."/>
            <person name="Alarico S."/>
            <person name="da Costa M.S."/>
            <person name="Empadinhas N."/>
        </authorList>
    </citation>
    <scope>FUNCTION</scope>
    <scope>CATALYTIC ACTIVITY</scope>
    <scope>SUBSTRATE SPECIFICITY</scope>
    <scope>BIOPHYSICOCHEMICAL PROPERTIES</scope>
    <scope>ACTIVITY REGULATION</scope>
    <scope>SUBUNIT</scope>
</reference>
<reference key="5">
    <citation type="journal article" date="2014" name="J. Biol. Chem.">
        <title>Mechanism of dephosphorylation of glucosyl-3-phosphoglycerate by a histidine phosphatase.</title>
        <authorList>
            <person name="Zheng Q."/>
            <person name="Jiang D."/>
            <person name="Zhang W."/>
            <person name="Zhang Q."/>
            <person name="Zhao Q."/>
            <person name="Jin J."/>
            <person name="Li X."/>
            <person name="Yang H."/>
            <person name="Bartlam M."/>
            <person name="Shaw N."/>
            <person name="Zhou W."/>
            <person name="Rao Z."/>
        </authorList>
    </citation>
    <scope>X-RAY CRYSTALLOGRAPHY (1.78 ANGSTROMS) OF APOENZYME AND COMPLEXES WITH PHOSPHATE AND VANADATE</scope>
    <scope>ACTIVE SITE</scope>
    <scope>REACTION MECHANISM</scope>
    <scope>SUBUNIT</scope>
    <scope>MUTAGENESIS OF ARG-10; HIS-11; ASN-17; ARG-60; HIS-159 AND LEU-209</scope>
    <source>
        <strain>H37Rv</strain>
    </source>
</reference>
<gene>
    <name evidence="4" type="primary">gpgP</name>
    <name type="ordered locus">Rv2419c</name>
</gene>
<name>GPGP_MYCTU</name>
<proteinExistence type="evidence at protein level"/>
<accession>P9WIC7</accession>
<accession>L0T9S0</accession>
<accession>P71724</accession>
<accession>Q7D764</accession>
<organism>
    <name type="scientific">Mycobacterium tuberculosis (strain ATCC 25618 / H37Rv)</name>
    <dbReference type="NCBI Taxonomy" id="83332"/>
    <lineage>
        <taxon>Bacteria</taxon>
        <taxon>Bacillati</taxon>
        <taxon>Actinomycetota</taxon>
        <taxon>Actinomycetes</taxon>
        <taxon>Mycobacteriales</taxon>
        <taxon>Mycobacteriaceae</taxon>
        <taxon>Mycobacterium</taxon>
        <taxon>Mycobacterium tuberculosis complex</taxon>
    </lineage>
</organism>
<comment type="function">
    <text evidence="2">Involved in the biosynthesis of mycobacterial methylglucose lipopolysaccharides (MGLPs). Catalyzes the dephosphorylation of glucosyl-3-phosphoglycerate (GPG) to glucosylglycerate (GG). GPG is the preferred substrate, but GpgP also exhibits low dephosphorylation activity on mannosyl-3-phosphoglycerate (MPG) and mannosylglucosyl-3-phosphoglycerate (MGPG) in vitro. Shows only trace of phosphoglycerate mutase (PGM) activity.</text>
</comment>
<comment type="catalytic activity">
    <reaction evidence="2">
        <text>(2R)-2-O-(alpha-D-glucopyranosyl)-3-phospho-glycerate + H2O = (2R)-2-O-(alpha-D-glucopyranosyl)-glycerate + phosphate</text>
        <dbReference type="Rhea" id="RHEA:31343"/>
        <dbReference type="ChEBI" id="CHEBI:15377"/>
        <dbReference type="ChEBI" id="CHEBI:43474"/>
        <dbReference type="ChEBI" id="CHEBI:62510"/>
        <dbReference type="ChEBI" id="CHEBI:62600"/>
        <dbReference type="EC" id="3.1.3.85"/>
    </reaction>
    <physiologicalReaction direction="left-to-right" evidence="2">
        <dbReference type="Rhea" id="RHEA:31344"/>
    </physiologicalReaction>
</comment>
<comment type="catalytic activity">
    <reaction evidence="2">
        <text>2-O-(alpha-D-mannosyl)-3-phosphoglycerate + H2O = (2R)-2-O-(alpha-D-mannosyl)-glycerate + phosphate</text>
        <dbReference type="Rhea" id="RHEA:19309"/>
        <dbReference type="ChEBI" id="CHEBI:15377"/>
        <dbReference type="ChEBI" id="CHEBI:43474"/>
        <dbReference type="ChEBI" id="CHEBI:57541"/>
        <dbReference type="ChEBI" id="CHEBI:57744"/>
        <dbReference type="EC" id="3.1.3.70"/>
    </reaction>
    <physiologicalReaction direction="left-to-right" evidence="2">
        <dbReference type="Rhea" id="RHEA:19310"/>
    </physiologicalReaction>
</comment>
<comment type="catalytic activity">
    <reaction evidence="2">
        <text>(2R)-2-O-[alpha-D-mannopyranosyl-(1-&gt;2)-alpha-D-glucopyranosyl]-3-phospho-glycerate + H2O = (2R)-2-O-[alpha-D-mannopyranosyl-(1-&gt;2)-alpha-D-glucopyranosyl]-glycerate + phosphate</text>
        <dbReference type="Rhea" id="RHEA:47696"/>
        <dbReference type="ChEBI" id="CHEBI:15377"/>
        <dbReference type="ChEBI" id="CHEBI:43474"/>
        <dbReference type="ChEBI" id="CHEBI:62602"/>
        <dbReference type="ChEBI" id="CHEBI:87836"/>
    </reaction>
    <physiologicalReaction direction="left-to-right" evidence="2">
        <dbReference type="Rhea" id="RHEA:47697"/>
    </physiologicalReaction>
</comment>
<comment type="activity regulation">
    <text evidence="2">Progressively inhibited by cobalt ions at concentrations between 10-50 mM and by copper ions at any concentration between 1-50 mM.</text>
</comment>
<comment type="biophysicochemical properties">
    <kinetics>
        <KM evidence="2">0.35 mM for glucosyl-3-phosphoglycerate (at 37 degrees Celsius)</KM>
        <Vmax evidence="2">67.2 umol/min/mg enzyme with glucosyl-3-phosphoglycerate as substrate (at 37 degrees Celsius)</Vmax>
    </kinetics>
    <phDependence>
        <text evidence="2">Optimum pH is 7 (at 37 degrees Celsius). Is active between pH 4.0 and 10.0.</text>
    </phDependence>
    <temperatureDependence>
        <text evidence="2">Optimum temperature is 45 degrees Celsius. Is active between 20 and 50 degrees Celsius.</text>
    </temperatureDependence>
</comment>
<comment type="subunit">
    <text evidence="2 3">Homodimer (PubMed:22355692). Dimerization of the enzyme is essential for its dephosphorylation activity (PubMed:24914210).</text>
</comment>
<comment type="similarity">
    <text evidence="5">Belongs to the phosphoglycerate mutase family.</text>
</comment>
<evidence type="ECO:0000269" key="1">
    <source>
    </source>
</evidence>
<evidence type="ECO:0000269" key="2">
    <source>
    </source>
</evidence>
<evidence type="ECO:0000269" key="3">
    <source>
    </source>
</evidence>
<evidence type="ECO:0000303" key="4">
    <source>
    </source>
</evidence>
<evidence type="ECO:0000305" key="5"/>
<evidence type="ECO:0000305" key="6">
    <source>
    </source>
</evidence>
<evidence type="ECO:0007829" key="7">
    <source>
        <dbReference type="PDB" id="6S2Q"/>
    </source>
</evidence>
<evidence type="ECO:0007829" key="8">
    <source>
        <dbReference type="PDB" id="6S2R"/>
    </source>
</evidence>